<sequence length="30" mass="3179">SIPCGESCVWIPCTITALAGCKCKSKVCYN</sequence>
<reference key="1">
    <citation type="journal article" date="1999" name="J. Mol. Biol.">
        <title>Plant cyclotides: a unique family of cyclic and knotted proteins that defines the cyclic cystine knot structural motif.</title>
        <authorList>
            <person name="Craik D.J."/>
            <person name="Daly N.L."/>
            <person name="Bond T."/>
            <person name="Waine C."/>
        </authorList>
    </citation>
    <scope>PROTEIN SEQUENCE</scope>
</reference>
<reference key="2">
    <citation type="journal article" date="2006" name="Biochem. J.">
        <title>A novel suite of cyclotides from Viola odorata: sequence variation and the implications for structure, function and stability.</title>
        <authorList>
            <person name="Ireland D.C."/>
            <person name="Colgrave M.L."/>
            <person name="Craik D.J."/>
        </authorList>
    </citation>
    <scope>PROTEIN SEQUENCE</scope>
    <scope>MASS SPECTROMETRY</scope>
</reference>
<feature type="peptide" id="PRO_0000043614" description="Cycloviolacin-O7">
    <location>
        <begin position="1"/>
        <end position="30"/>
    </location>
</feature>
<feature type="disulfide bond">
    <location>
        <begin position="4"/>
        <end position="21"/>
    </location>
</feature>
<feature type="disulfide bond">
    <location>
        <begin position="8"/>
        <end position="23"/>
    </location>
</feature>
<feature type="disulfide bond">
    <location>
        <begin position="13"/>
        <end position="28"/>
    </location>
</feature>
<feature type="cross-link" description="Cyclopeptide (Ser-Asn)">
    <location>
        <begin position="1"/>
        <end position="30"/>
    </location>
</feature>
<evidence type="ECO:0000255" key="1">
    <source>
        <dbReference type="PROSITE-ProRule" id="PRU00395"/>
    </source>
</evidence>
<evidence type="ECO:0000269" key="2">
    <source>
    </source>
</evidence>
<evidence type="ECO:0000305" key="3"/>
<dbReference type="SMR" id="P58439"/>
<dbReference type="GO" id="GO:0006952">
    <property type="term" value="P:defense response"/>
    <property type="evidence" value="ECO:0000250"/>
    <property type="project" value="UniProtKB"/>
</dbReference>
<dbReference type="InterPro" id="IPR005535">
    <property type="entry name" value="Cyclotide"/>
</dbReference>
<dbReference type="InterPro" id="IPR012323">
    <property type="entry name" value="Cyclotide_bracelet_CS"/>
</dbReference>
<dbReference type="InterPro" id="IPR036146">
    <property type="entry name" value="Cyclotide_sf"/>
</dbReference>
<dbReference type="Pfam" id="PF03784">
    <property type="entry name" value="Cyclotide"/>
    <property type="match status" value="1"/>
</dbReference>
<dbReference type="PIRSF" id="PIRSF037891">
    <property type="entry name" value="Cycloviolacin"/>
    <property type="match status" value="1"/>
</dbReference>
<dbReference type="SUPFAM" id="SSF57038">
    <property type="entry name" value="Cyclotides"/>
    <property type="match status" value="1"/>
</dbReference>
<dbReference type="PROSITE" id="PS51052">
    <property type="entry name" value="CYCLOTIDE"/>
    <property type="match status" value="1"/>
</dbReference>
<dbReference type="PROSITE" id="PS60008">
    <property type="entry name" value="CYCLOTIDE_BRACELET"/>
    <property type="match status" value="1"/>
</dbReference>
<name>CYO7_VIOOD</name>
<keyword id="KW-0903">Direct protein sequencing</keyword>
<keyword id="KW-1015">Disulfide bond</keyword>
<keyword id="KW-0960">Knottin</keyword>
<keyword id="KW-0611">Plant defense</keyword>
<accession>P58439</accession>
<comment type="function">
    <text>Probably participates in a plant defense mechanism.</text>
</comment>
<comment type="domain">
    <text>The presence of a 'disulfide through disulfide knot' structurally defines this protein as a knottin.</text>
</comment>
<comment type="PTM">
    <text>This is a cyclic peptide.</text>
</comment>
<comment type="mass spectrometry" mass="3152.5" method="MALDI" evidence="2"/>
<comment type="similarity">
    <text evidence="1">Belongs to the cyclotide family. Bracelet subfamily.</text>
</comment>
<comment type="caution">
    <text evidence="3">This peptide is cyclic. The start position was chosen by similarity to OAK1 (kalata-B1) for which the DNA sequence is known.</text>
</comment>
<proteinExistence type="evidence at protein level"/>
<protein>
    <recommendedName>
        <fullName>Cycloviolacin-O7</fullName>
    </recommendedName>
</protein>
<organism>
    <name type="scientific">Viola odorata</name>
    <name type="common">Sweet violet</name>
    <dbReference type="NCBI Taxonomy" id="97441"/>
    <lineage>
        <taxon>Eukaryota</taxon>
        <taxon>Viridiplantae</taxon>
        <taxon>Streptophyta</taxon>
        <taxon>Embryophyta</taxon>
        <taxon>Tracheophyta</taxon>
        <taxon>Spermatophyta</taxon>
        <taxon>Magnoliopsida</taxon>
        <taxon>eudicotyledons</taxon>
        <taxon>Gunneridae</taxon>
        <taxon>Pentapetalae</taxon>
        <taxon>rosids</taxon>
        <taxon>fabids</taxon>
        <taxon>Malpighiales</taxon>
        <taxon>Violaceae</taxon>
        <taxon>Viola</taxon>
        <taxon>Viola subgen. Viola</taxon>
        <taxon>Viola sect. Viola</taxon>
        <taxon>Viola subsect. Viola</taxon>
    </lineage>
</organism>